<reference key="1">
    <citation type="submission" date="2006-08" db="EMBL/GenBank/DDBJ databases">
        <title>Complete sequence of Maricaulis maris MCS10.</title>
        <authorList>
            <consortium name="US DOE Joint Genome Institute"/>
            <person name="Copeland A."/>
            <person name="Lucas S."/>
            <person name="Lapidus A."/>
            <person name="Barry K."/>
            <person name="Detter J.C."/>
            <person name="Glavina del Rio T."/>
            <person name="Hammon N."/>
            <person name="Israni S."/>
            <person name="Dalin E."/>
            <person name="Tice H."/>
            <person name="Pitluck S."/>
            <person name="Saunders E."/>
            <person name="Brettin T."/>
            <person name="Bruce D."/>
            <person name="Han C."/>
            <person name="Tapia R."/>
            <person name="Gilna P."/>
            <person name="Schmutz J."/>
            <person name="Larimer F."/>
            <person name="Land M."/>
            <person name="Hauser L."/>
            <person name="Kyrpides N."/>
            <person name="Mikhailova N."/>
            <person name="Viollier P."/>
            <person name="Stephens C."/>
            <person name="Richardson P."/>
        </authorList>
    </citation>
    <scope>NUCLEOTIDE SEQUENCE [LARGE SCALE GENOMIC DNA]</scope>
    <source>
        <strain>MCS10</strain>
    </source>
</reference>
<accession>Q0AS39</accession>
<name>CH10_MARMM</name>
<organism>
    <name type="scientific">Maricaulis maris (strain MCS10)</name>
    <name type="common">Caulobacter maris</name>
    <dbReference type="NCBI Taxonomy" id="394221"/>
    <lineage>
        <taxon>Bacteria</taxon>
        <taxon>Pseudomonadati</taxon>
        <taxon>Pseudomonadota</taxon>
        <taxon>Alphaproteobacteria</taxon>
        <taxon>Maricaulales</taxon>
        <taxon>Maricaulaceae</taxon>
        <taxon>Maricaulis</taxon>
    </lineage>
</organism>
<feature type="chain" id="PRO_1000025298" description="Co-chaperonin GroES">
    <location>
        <begin position="1"/>
        <end position="95"/>
    </location>
</feature>
<gene>
    <name evidence="1" type="primary">groES</name>
    <name evidence="1" type="synonym">groS</name>
    <name type="ordered locus">Mmar10_0605</name>
</gene>
<dbReference type="EMBL" id="CP000449">
    <property type="protein sequence ID" value="ABI64898.1"/>
    <property type="molecule type" value="Genomic_DNA"/>
</dbReference>
<dbReference type="RefSeq" id="WP_011642545.1">
    <property type="nucleotide sequence ID" value="NC_008347.1"/>
</dbReference>
<dbReference type="SMR" id="Q0AS39"/>
<dbReference type="STRING" id="394221.Mmar10_0605"/>
<dbReference type="KEGG" id="mmr:Mmar10_0605"/>
<dbReference type="eggNOG" id="COG0234">
    <property type="taxonomic scope" value="Bacteria"/>
</dbReference>
<dbReference type="HOGENOM" id="CLU_132825_1_0_5"/>
<dbReference type="OrthoDB" id="9806791at2"/>
<dbReference type="Proteomes" id="UP000001964">
    <property type="component" value="Chromosome"/>
</dbReference>
<dbReference type="GO" id="GO:0005737">
    <property type="term" value="C:cytoplasm"/>
    <property type="evidence" value="ECO:0007669"/>
    <property type="project" value="UniProtKB-SubCell"/>
</dbReference>
<dbReference type="GO" id="GO:0005524">
    <property type="term" value="F:ATP binding"/>
    <property type="evidence" value="ECO:0007669"/>
    <property type="project" value="InterPro"/>
</dbReference>
<dbReference type="GO" id="GO:0046872">
    <property type="term" value="F:metal ion binding"/>
    <property type="evidence" value="ECO:0007669"/>
    <property type="project" value="TreeGrafter"/>
</dbReference>
<dbReference type="GO" id="GO:0044183">
    <property type="term" value="F:protein folding chaperone"/>
    <property type="evidence" value="ECO:0007669"/>
    <property type="project" value="InterPro"/>
</dbReference>
<dbReference type="GO" id="GO:0051087">
    <property type="term" value="F:protein-folding chaperone binding"/>
    <property type="evidence" value="ECO:0007669"/>
    <property type="project" value="TreeGrafter"/>
</dbReference>
<dbReference type="GO" id="GO:0051082">
    <property type="term" value="F:unfolded protein binding"/>
    <property type="evidence" value="ECO:0007669"/>
    <property type="project" value="TreeGrafter"/>
</dbReference>
<dbReference type="GO" id="GO:0051085">
    <property type="term" value="P:chaperone cofactor-dependent protein refolding"/>
    <property type="evidence" value="ECO:0007669"/>
    <property type="project" value="TreeGrafter"/>
</dbReference>
<dbReference type="CDD" id="cd00320">
    <property type="entry name" value="cpn10"/>
    <property type="match status" value="1"/>
</dbReference>
<dbReference type="FunFam" id="2.30.33.40:FF:000001">
    <property type="entry name" value="10 kDa chaperonin"/>
    <property type="match status" value="1"/>
</dbReference>
<dbReference type="Gene3D" id="2.30.33.40">
    <property type="entry name" value="GroES chaperonin"/>
    <property type="match status" value="1"/>
</dbReference>
<dbReference type="HAMAP" id="MF_00580">
    <property type="entry name" value="CH10"/>
    <property type="match status" value="1"/>
</dbReference>
<dbReference type="InterPro" id="IPR020818">
    <property type="entry name" value="Chaperonin_GroES"/>
</dbReference>
<dbReference type="InterPro" id="IPR037124">
    <property type="entry name" value="Chaperonin_GroES_sf"/>
</dbReference>
<dbReference type="InterPro" id="IPR018369">
    <property type="entry name" value="Chaprnonin_Cpn10_CS"/>
</dbReference>
<dbReference type="InterPro" id="IPR011032">
    <property type="entry name" value="GroES-like_sf"/>
</dbReference>
<dbReference type="NCBIfam" id="NF001527">
    <property type="entry name" value="PRK00364.1-2"/>
    <property type="match status" value="1"/>
</dbReference>
<dbReference type="NCBIfam" id="NF001529">
    <property type="entry name" value="PRK00364.1-5"/>
    <property type="match status" value="1"/>
</dbReference>
<dbReference type="NCBIfam" id="NF001531">
    <property type="entry name" value="PRK00364.2-2"/>
    <property type="match status" value="1"/>
</dbReference>
<dbReference type="NCBIfam" id="NF001533">
    <property type="entry name" value="PRK00364.2-4"/>
    <property type="match status" value="1"/>
</dbReference>
<dbReference type="PANTHER" id="PTHR10772">
    <property type="entry name" value="10 KDA HEAT SHOCK PROTEIN"/>
    <property type="match status" value="1"/>
</dbReference>
<dbReference type="PANTHER" id="PTHR10772:SF58">
    <property type="entry name" value="CO-CHAPERONIN GROES"/>
    <property type="match status" value="1"/>
</dbReference>
<dbReference type="Pfam" id="PF00166">
    <property type="entry name" value="Cpn10"/>
    <property type="match status" value="1"/>
</dbReference>
<dbReference type="PRINTS" id="PR00297">
    <property type="entry name" value="CHAPERONIN10"/>
</dbReference>
<dbReference type="SMART" id="SM00883">
    <property type="entry name" value="Cpn10"/>
    <property type="match status" value="1"/>
</dbReference>
<dbReference type="SUPFAM" id="SSF50129">
    <property type="entry name" value="GroES-like"/>
    <property type="match status" value="1"/>
</dbReference>
<dbReference type="PROSITE" id="PS00681">
    <property type="entry name" value="CHAPERONINS_CPN10"/>
    <property type="match status" value="1"/>
</dbReference>
<evidence type="ECO:0000255" key="1">
    <source>
        <dbReference type="HAMAP-Rule" id="MF_00580"/>
    </source>
</evidence>
<protein>
    <recommendedName>
        <fullName evidence="1">Co-chaperonin GroES</fullName>
    </recommendedName>
    <alternativeName>
        <fullName evidence="1">10 kDa chaperonin</fullName>
    </alternativeName>
    <alternativeName>
        <fullName evidence="1">Chaperonin-10</fullName>
        <shortName evidence="1">Cpn10</shortName>
    </alternativeName>
</protein>
<proteinExistence type="inferred from homology"/>
<keyword id="KW-0143">Chaperone</keyword>
<keyword id="KW-0963">Cytoplasm</keyword>
<keyword id="KW-1185">Reference proteome</keyword>
<comment type="function">
    <text evidence="1">Together with the chaperonin GroEL, plays an essential role in assisting protein folding. The GroEL-GroES system forms a nano-cage that allows encapsulation of the non-native substrate proteins and provides a physical environment optimized to promote and accelerate protein folding. GroES binds to the apical surface of the GroEL ring, thereby capping the opening of the GroEL channel.</text>
</comment>
<comment type="subunit">
    <text evidence="1">Heptamer of 7 subunits arranged in a ring. Interacts with the chaperonin GroEL.</text>
</comment>
<comment type="subcellular location">
    <subcellularLocation>
        <location evidence="1">Cytoplasm</location>
    </subcellularLocation>
</comment>
<comment type="similarity">
    <text evidence="1">Belongs to the GroES chaperonin family.</text>
</comment>
<sequence length="95" mass="10232">MTFRPLHDRVLVKRVEEESTTKGGIIIPDTAKEKPQEGEVVAIGGGAIKEDGSVRPLDVKAGDRILFGKWSGTEVTVDGVELLIMKESDILGVMA</sequence>